<keyword id="KW-0032">Aminotransferase</keyword>
<keyword id="KW-1185">Reference proteome</keyword>
<keyword id="KW-0808">Transferase</keyword>
<gene>
    <name evidence="1" type="primary">gcvT</name>
    <name type="ordered locus">ECA0743</name>
</gene>
<dbReference type="EC" id="2.1.2.10" evidence="1"/>
<dbReference type="EMBL" id="BX950851">
    <property type="protein sequence ID" value="CAG73657.1"/>
    <property type="molecule type" value="Genomic_DNA"/>
</dbReference>
<dbReference type="RefSeq" id="WP_011092350.1">
    <property type="nucleotide sequence ID" value="NC_004547.2"/>
</dbReference>
<dbReference type="SMR" id="Q6D976"/>
<dbReference type="STRING" id="218491.ECA0743"/>
<dbReference type="GeneID" id="57207473"/>
<dbReference type="KEGG" id="eca:ECA0743"/>
<dbReference type="PATRIC" id="fig|218491.5.peg.741"/>
<dbReference type="eggNOG" id="COG0404">
    <property type="taxonomic scope" value="Bacteria"/>
</dbReference>
<dbReference type="HOGENOM" id="CLU_007884_10_2_6"/>
<dbReference type="OrthoDB" id="9774591at2"/>
<dbReference type="Proteomes" id="UP000007966">
    <property type="component" value="Chromosome"/>
</dbReference>
<dbReference type="GO" id="GO:0005829">
    <property type="term" value="C:cytosol"/>
    <property type="evidence" value="ECO:0007669"/>
    <property type="project" value="TreeGrafter"/>
</dbReference>
<dbReference type="GO" id="GO:0005960">
    <property type="term" value="C:glycine cleavage complex"/>
    <property type="evidence" value="ECO:0007669"/>
    <property type="project" value="InterPro"/>
</dbReference>
<dbReference type="GO" id="GO:0004047">
    <property type="term" value="F:aminomethyltransferase activity"/>
    <property type="evidence" value="ECO:0007669"/>
    <property type="project" value="UniProtKB-UniRule"/>
</dbReference>
<dbReference type="GO" id="GO:0008483">
    <property type="term" value="F:transaminase activity"/>
    <property type="evidence" value="ECO:0007669"/>
    <property type="project" value="UniProtKB-KW"/>
</dbReference>
<dbReference type="GO" id="GO:0019464">
    <property type="term" value="P:glycine decarboxylation via glycine cleavage system"/>
    <property type="evidence" value="ECO:0007669"/>
    <property type="project" value="UniProtKB-UniRule"/>
</dbReference>
<dbReference type="FunFam" id="2.40.30.110:FF:000001">
    <property type="entry name" value="Aminomethyltransferase"/>
    <property type="match status" value="1"/>
</dbReference>
<dbReference type="FunFam" id="3.30.70.1400:FF:000001">
    <property type="entry name" value="Aminomethyltransferase"/>
    <property type="match status" value="1"/>
</dbReference>
<dbReference type="FunFam" id="4.10.1250.10:FF:000001">
    <property type="entry name" value="Aminomethyltransferase"/>
    <property type="match status" value="1"/>
</dbReference>
<dbReference type="Gene3D" id="2.40.30.110">
    <property type="entry name" value="Aminomethyltransferase beta-barrel domains"/>
    <property type="match status" value="1"/>
</dbReference>
<dbReference type="Gene3D" id="3.30.70.1400">
    <property type="entry name" value="Aminomethyltransferase beta-barrel domains"/>
    <property type="match status" value="1"/>
</dbReference>
<dbReference type="Gene3D" id="4.10.1250.10">
    <property type="entry name" value="Aminomethyltransferase fragment"/>
    <property type="match status" value="1"/>
</dbReference>
<dbReference type="Gene3D" id="3.30.1360.120">
    <property type="entry name" value="Probable tRNA modification gtpase trme, domain 1"/>
    <property type="match status" value="1"/>
</dbReference>
<dbReference type="HAMAP" id="MF_00259">
    <property type="entry name" value="GcvT"/>
    <property type="match status" value="1"/>
</dbReference>
<dbReference type="InterPro" id="IPR006223">
    <property type="entry name" value="GCS_T"/>
</dbReference>
<dbReference type="InterPro" id="IPR022903">
    <property type="entry name" value="GCS_T_bac"/>
</dbReference>
<dbReference type="InterPro" id="IPR013977">
    <property type="entry name" value="GCST_C"/>
</dbReference>
<dbReference type="InterPro" id="IPR006222">
    <property type="entry name" value="GCV_T_N"/>
</dbReference>
<dbReference type="InterPro" id="IPR028896">
    <property type="entry name" value="GcvT/YgfZ/DmdA"/>
</dbReference>
<dbReference type="InterPro" id="IPR029043">
    <property type="entry name" value="GcvT/YgfZ_C"/>
</dbReference>
<dbReference type="InterPro" id="IPR027266">
    <property type="entry name" value="TrmE/GcvT_dom1"/>
</dbReference>
<dbReference type="NCBIfam" id="TIGR00528">
    <property type="entry name" value="gcvT"/>
    <property type="match status" value="1"/>
</dbReference>
<dbReference type="NCBIfam" id="NF001567">
    <property type="entry name" value="PRK00389.1"/>
    <property type="match status" value="1"/>
</dbReference>
<dbReference type="PANTHER" id="PTHR43757">
    <property type="entry name" value="AMINOMETHYLTRANSFERASE"/>
    <property type="match status" value="1"/>
</dbReference>
<dbReference type="PANTHER" id="PTHR43757:SF2">
    <property type="entry name" value="AMINOMETHYLTRANSFERASE, MITOCHONDRIAL"/>
    <property type="match status" value="1"/>
</dbReference>
<dbReference type="Pfam" id="PF01571">
    <property type="entry name" value="GCV_T"/>
    <property type="match status" value="1"/>
</dbReference>
<dbReference type="Pfam" id="PF08669">
    <property type="entry name" value="GCV_T_C"/>
    <property type="match status" value="1"/>
</dbReference>
<dbReference type="PIRSF" id="PIRSF006487">
    <property type="entry name" value="GcvT"/>
    <property type="match status" value="1"/>
</dbReference>
<dbReference type="SUPFAM" id="SSF101790">
    <property type="entry name" value="Aminomethyltransferase beta-barrel domain"/>
    <property type="match status" value="1"/>
</dbReference>
<dbReference type="SUPFAM" id="SSF103025">
    <property type="entry name" value="Folate-binding domain"/>
    <property type="match status" value="1"/>
</dbReference>
<protein>
    <recommendedName>
        <fullName evidence="1">Aminomethyltransferase</fullName>
        <ecNumber evidence="1">2.1.2.10</ecNumber>
    </recommendedName>
    <alternativeName>
        <fullName evidence="1">Glycine cleavage system T protein</fullName>
    </alternativeName>
</protein>
<feature type="chain" id="PRO_0000122557" description="Aminomethyltransferase">
    <location>
        <begin position="1"/>
        <end position="371"/>
    </location>
</feature>
<proteinExistence type="inferred from homology"/>
<organism>
    <name type="scientific">Pectobacterium atrosepticum (strain SCRI 1043 / ATCC BAA-672)</name>
    <name type="common">Erwinia carotovora subsp. atroseptica</name>
    <dbReference type="NCBI Taxonomy" id="218491"/>
    <lineage>
        <taxon>Bacteria</taxon>
        <taxon>Pseudomonadati</taxon>
        <taxon>Pseudomonadota</taxon>
        <taxon>Gammaproteobacteria</taxon>
        <taxon>Enterobacterales</taxon>
        <taxon>Pectobacteriaceae</taxon>
        <taxon>Pectobacterium</taxon>
    </lineage>
</organism>
<comment type="function">
    <text evidence="1">The glycine cleavage system catalyzes the degradation of glycine.</text>
</comment>
<comment type="catalytic activity">
    <reaction evidence="1">
        <text>N(6)-[(R)-S(8)-aminomethyldihydrolipoyl]-L-lysyl-[protein] + (6S)-5,6,7,8-tetrahydrofolate = N(6)-[(R)-dihydrolipoyl]-L-lysyl-[protein] + (6R)-5,10-methylene-5,6,7,8-tetrahydrofolate + NH4(+)</text>
        <dbReference type="Rhea" id="RHEA:16945"/>
        <dbReference type="Rhea" id="RHEA-COMP:10475"/>
        <dbReference type="Rhea" id="RHEA-COMP:10492"/>
        <dbReference type="ChEBI" id="CHEBI:15636"/>
        <dbReference type="ChEBI" id="CHEBI:28938"/>
        <dbReference type="ChEBI" id="CHEBI:57453"/>
        <dbReference type="ChEBI" id="CHEBI:83100"/>
        <dbReference type="ChEBI" id="CHEBI:83143"/>
        <dbReference type="EC" id="2.1.2.10"/>
    </reaction>
</comment>
<comment type="subunit">
    <text evidence="1">The glycine cleavage system is composed of four proteins: P, T, L and H.</text>
</comment>
<comment type="similarity">
    <text evidence="1">Belongs to the GcvT family.</text>
</comment>
<sequence length="371" mass="40798">MAKQTPLYQQHLADGAKMVDFHGWMMPLHYGSQLDEHHIVRRDAGIFDVSHMTIVDLHGVRTREFLRYLLANDVAKLTQPGKALYTGMLNASGGVIDDLIVYFLTEDYFRLVVNSATREKDLAWIEQHAAAFGVDIRERDELALVAVQGPQAQEKVQGLLKAKGLSDEDVAAVASMKPFFGKQAGDFFVATTGYTGEAGYEIALPNEQVVDFWQQLLAVGVKPCGLGARDTLRLEAGMNLYGQDMDEGISPLAANMGWTIAWQPEDRQFIGREALVHQREKGTEQLVGLVLTEKGVLRNDLSVRFTDSDGVMREGVITSGSFSPTLGVSIALARVPAGIGEQAIVQIRNRELPVRVTKPGFVRAGKAIVQY</sequence>
<name>GCST_PECAS</name>
<accession>Q6D976</accession>
<reference key="1">
    <citation type="journal article" date="2004" name="Proc. Natl. Acad. Sci. U.S.A.">
        <title>Genome sequence of the enterobacterial phytopathogen Erwinia carotovora subsp. atroseptica and characterization of virulence factors.</title>
        <authorList>
            <person name="Bell K.S."/>
            <person name="Sebaihia M."/>
            <person name="Pritchard L."/>
            <person name="Holden M.T.G."/>
            <person name="Hyman L.J."/>
            <person name="Holeva M.C."/>
            <person name="Thomson N.R."/>
            <person name="Bentley S.D."/>
            <person name="Churcher L.J.C."/>
            <person name="Mungall K."/>
            <person name="Atkin R."/>
            <person name="Bason N."/>
            <person name="Brooks K."/>
            <person name="Chillingworth T."/>
            <person name="Clark K."/>
            <person name="Doggett J."/>
            <person name="Fraser A."/>
            <person name="Hance Z."/>
            <person name="Hauser H."/>
            <person name="Jagels K."/>
            <person name="Moule S."/>
            <person name="Norbertczak H."/>
            <person name="Ormond D."/>
            <person name="Price C."/>
            <person name="Quail M.A."/>
            <person name="Sanders M."/>
            <person name="Walker D."/>
            <person name="Whitehead S."/>
            <person name="Salmond G.P.C."/>
            <person name="Birch P.R.J."/>
            <person name="Parkhill J."/>
            <person name="Toth I.K."/>
        </authorList>
    </citation>
    <scope>NUCLEOTIDE SEQUENCE [LARGE SCALE GENOMIC DNA]</scope>
    <source>
        <strain>SCRI 1043 / ATCC BAA-672</strain>
    </source>
</reference>
<evidence type="ECO:0000255" key="1">
    <source>
        <dbReference type="HAMAP-Rule" id="MF_00259"/>
    </source>
</evidence>